<protein>
    <recommendedName>
        <fullName>Chalcone--flavanone isomerase 2</fullName>
        <shortName>Chalcone isomerase 2</shortName>
        <ecNumber>5.5.1.6</ecNumber>
    </recommendedName>
</protein>
<accession>A5ANT9</accession>
<sequence length="234" mass="25082">MSPVPSVTAVQVENVLFPPSVKPPGSTNDLFLGGAGVRGLEIQGKFVKFTAIGVYLESSAVPTLAVKWKGKTVEELADSVDFFRDVVTGPFEKFTKVTTILPLTGRQYSDKVSENCVAFWKSVGIYTDAEAKAIEKFNEVLKDETFPPGNSILFTHSPLGALTMSFSKDGSLPEVGNAVIENKLLTEAVLESIIGKHGVSPEAKKSLAARLSELFCKEAGDEKIEAEKVAPVAC</sequence>
<reference key="1">
    <citation type="journal article" date="2007" name="PLoS ONE">
        <title>A high quality draft consensus sequence of the genome of a heterozygous grapevine variety.</title>
        <authorList>
            <person name="Velasco R."/>
            <person name="Zharkikh A."/>
            <person name="Troggio M."/>
            <person name="Cartwright D.A."/>
            <person name="Cestaro A."/>
            <person name="Pruss D."/>
            <person name="Pindo M."/>
            <person name="FitzGerald L.M."/>
            <person name="Vezzulli S."/>
            <person name="Reid J."/>
            <person name="Malacarne G."/>
            <person name="Iliev D."/>
            <person name="Coppola G."/>
            <person name="Wardell B."/>
            <person name="Micheletti D."/>
            <person name="Macalma T."/>
            <person name="Facci M."/>
            <person name="Mitchell J.T."/>
            <person name="Perazzolli M."/>
            <person name="Eldredge G."/>
            <person name="Gatto P."/>
            <person name="Oyzerski R."/>
            <person name="Moretto M."/>
            <person name="Gutin N."/>
            <person name="Stefanini M."/>
            <person name="Chen Y."/>
            <person name="Segala C."/>
            <person name="Davenport C."/>
            <person name="Dematte L."/>
            <person name="Mraz A."/>
            <person name="Battilana J."/>
            <person name="Stormo K."/>
            <person name="Costa F."/>
            <person name="Tao Q."/>
            <person name="Si-Ammour A."/>
            <person name="Harkins T."/>
            <person name="Lackey A."/>
            <person name="Perbost C."/>
            <person name="Taillon B."/>
            <person name="Stella A."/>
            <person name="Solovyev V."/>
            <person name="Fawcett J.A."/>
            <person name="Sterck L."/>
            <person name="Vandepoele K."/>
            <person name="Grando S.M."/>
            <person name="Toppo S."/>
            <person name="Moser C."/>
            <person name="Lanchbury J."/>
            <person name="Bogden R."/>
            <person name="Skolnick M."/>
            <person name="Sgaramella V."/>
            <person name="Bhatnagar S.K."/>
            <person name="Fontana P."/>
            <person name="Gutin A."/>
            <person name="Van de Peer Y."/>
            <person name="Salamini F."/>
            <person name="Viola R."/>
        </authorList>
    </citation>
    <scope>NUCLEOTIDE SEQUENCE [LARGE SCALE GENOMIC DNA]</scope>
    <source>
        <strain>cv. Pinot noir</strain>
    </source>
</reference>
<keyword id="KW-0284">Flavonoid biosynthesis</keyword>
<keyword id="KW-0413">Isomerase</keyword>
<comment type="function">
    <text evidence="1">Catalyzes the intramolecular cyclization of bicyclic chalcones into tricyclic (S)-flavanones. Responsible for the isomerization of 4,2',4',6'-tetrahydroxychalcone (also termed chalcone) into naringenin (By similarity).</text>
</comment>
<comment type="catalytic activity">
    <reaction>
        <text>a chalcone = a flavanone.</text>
        <dbReference type="EC" id="5.5.1.6"/>
    </reaction>
</comment>
<comment type="pathway">
    <text>Secondary metabolite biosynthesis; flavonoid biosynthesis.</text>
</comment>
<comment type="miscellaneous">
    <text>Part of the biosynthetic pathway for all classes of flavonoids, a large class of secondary plant metabolites, many of which are brightly colored.</text>
</comment>
<comment type="similarity">
    <text evidence="2">Belongs to the chalcone isomerase family.</text>
</comment>
<dbReference type="EC" id="5.5.1.6"/>
<dbReference type="EMBL" id="AM430986">
    <property type="protein sequence ID" value="CAN60439.1"/>
    <property type="molecule type" value="Genomic_DNA"/>
</dbReference>
<dbReference type="EMBL" id="AM458653">
    <property type="protein sequence ID" value="CAN74526.1"/>
    <property type="molecule type" value="Genomic_DNA"/>
</dbReference>
<dbReference type="SMR" id="A5ANT9"/>
<dbReference type="PaxDb" id="29760-VIT_13s0067g03820.t01"/>
<dbReference type="EnsemblPlants" id="Vitvi13g00225_t001">
    <property type="protein sequence ID" value="Vitvi13g00225_P001"/>
    <property type="gene ID" value="Vitvi13g00225"/>
</dbReference>
<dbReference type="Gramene" id="Vitvi13g00225_t001">
    <property type="protein sequence ID" value="Vitvi13g00225_P001"/>
    <property type="gene ID" value="Vitvi13g00225"/>
</dbReference>
<dbReference type="eggNOG" id="ENOG502QR5P">
    <property type="taxonomic scope" value="Eukaryota"/>
</dbReference>
<dbReference type="HOGENOM" id="CLU_074682_0_0_1"/>
<dbReference type="OMA" id="CGADSEK"/>
<dbReference type="OrthoDB" id="1903537at2759"/>
<dbReference type="UniPathway" id="UPA00154"/>
<dbReference type="ExpressionAtlas" id="A5ANT9">
    <property type="expression patterns" value="baseline and differential"/>
</dbReference>
<dbReference type="GO" id="GO:0045430">
    <property type="term" value="F:chalcone isomerase activity"/>
    <property type="evidence" value="ECO:0007669"/>
    <property type="project" value="UniProtKB-EC"/>
</dbReference>
<dbReference type="GO" id="GO:0009813">
    <property type="term" value="P:flavonoid biosynthetic process"/>
    <property type="evidence" value="ECO:0007669"/>
    <property type="project" value="UniProtKB-UniPathway"/>
</dbReference>
<dbReference type="Gene3D" id="1.10.890.20">
    <property type="match status" value="1"/>
</dbReference>
<dbReference type="Gene3D" id="3.50.70.10">
    <property type="match status" value="1"/>
</dbReference>
<dbReference type="InterPro" id="IPR044164">
    <property type="entry name" value="CFI"/>
</dbReference>
<dbReference type="InterPro" id="IPR016087">
    <property type="entry name" value="Chalcone_isomerase"/>
</dbReference>
<dbReference type="InterPro" id="IPR016088">
    <property type="entry name" value="Chalcone_isomerase_3-sand"/>
</dbReference>
<dbReference type="InterPro" id="IPR016089">
    <property type="entry name" value="Chalcone_isomerase_bundle_sf"/>
</dbReference>
<dbReference type="InterPro" id="IPR036298">
    <property type="entry name" value="Chalcone_isomerase_sf"/>
</dbReference>
<dbReference type="PANTHER" id="PTHR28039:SF8">
    <property type="entry name" value="CHALCONE--FLAVANONE ISOMERASE 1-RELATED"/>
    <property type="match status" value="1"/>
</dbReference>
<dbReference type="PANTHER" id="PTHR28039">
    <property type="entry name" value="CHALCONE--FLAVONONE ISOMERASE 1-RELATED"/>
    <property type="match status" value="1"/>
</dbReference>
<dbReference type="Pfam" id="PF02431">
    <property type="entry name" value="Chalcone"/>
    <property type="match status" value="1"/>
</dbReference>
<dbReference type="SUPFAM" id="SSF54626">
    <property type="entry name" value="Chalcone isomerase"/>
    <property type="match status" value="1"/>
</dbReference>
<evidence type="ECO:0000250" key="1"/>
<evidence type="ECO:0000305" key="2"/>
<organism>
    <name type="scientific">Vitis vinifera</name>
    <name type="common">Grape</name>
    <dbReference type="NCBI Taxonomy" id="29760"/>
    <lineage>
        <taxon>Eukaryota</taxon>
        <taxon>Viridiplantae</taxon>
        <taxon>Streptophyta</taxon>
        <taxon>Embryophyta</taxon>
        <taxon>Tracheophyta</taxon>
        <taxon>Spermatophyta</taxon>
        <taxon>Magnoliopsida</taxon>
        <taxon>eudicotyledons</taxon>
        <taxon>Gunneridae</taxon>
        <taxon>Pentapetalae</taxon>
        <taxon>rosids</taxon>
        <taxon>Vitales</taxon>
        <taxon>Vitaceae</taxon>
        <taxon>Viteae</taxon>
        <taxon>Vitis</taxon>
    </lineage>
</organism>
<gene>
    <name type="primary">CHI2</name>
    <name type="ORF">VITISV_015868</name>
    <name type="ORF">VITISV_038602</name>
</gene>
<name>CFI2_VITVI</name>
<proteinExistence type="inferred from homology"/>
<feature type="chain" id="PRO_0000300855" description="Chalcone--flavanone isomerase 2">
    <location>
        <begin position="1"/>
        <end position="234"/>
    </location>
</feature>
<feature type="binding site" evidence="1">
    <location>
        <position position="50"/>
    </location>
    <ligand>
        <name>substrate</name>
    </ligand>
</feature>
<feature type="binding site" evidence="1">
    <location>
        <position position="115"/>
    </location>
    <ligand>
        <name>substrate</name>
    </ligand>
</feature>
<feature type="binding site" evidence="1">
    <location>
        <position position="192"/>
    </location>
    <ligand>
        <name>substrate</name>
    </ligand>
</feature>
<feature type="site" description="Important for catalytic activity" evidence="1">
    <location>
        <position position="108"/>
    </location>
</feature>